<accession>B7NAP9</accession>
<reference key="1">
    <citation type="journal article" date="2009" name="PLoS Genet.">
        <title>Organised genome dynamics in the Escherichia coli species results in highly diverse adaptive paths.</title>
        <authorList>
            <person name="Touchon M."/>
            <person name="Hoede C."/>
            <person name="Tenaillon O."/>
            <person name="Barbe V."/>
            <person name="Baeriswyl S."/>
            <person name="Bidet P."/>
            <person name="Bingen E."/>
            <person name="Bonacorsi S."/>
            <person name="Bouchier C."/>
            <person name="Bouvet O."/>
            <person name="Calteau A."/>
            <person name="Chiapello H."/>
            <person name="Clermont O."/>
            <person name="Cruveiller S."/>
            <person name="Danchin A."/>
            <person name="Diard M."/>
            <person name="Dossat C."/>
            <person name="Karoui M.E."/>
            <person name="Frapy E."/>
            <person name="Garry L."/>
            <person name="Ghigo J.M."/>
            <person name="Gilles A.M."/>
            <person name="Johnson J."/>
            <person name="Le Bouguenec C."/>
            <person name="Lescat M."/>
            <person name="Mangenot S."/>
            <person name="Martinez-Jehanne V."/>
            <person name="Matic I."/>
            <person name="Nassif X."/>
            <person name="Oztas S."/>
            <person name="Petit M.A."/>
            <person name="Pichon C."/>
            <person name="Rouy Z."/>
            <person name="Ruf C.S."/>
            <person name="Schneider D."/>
            <person name="Tourret J."/>
            <person name="Vacherie B."/>
            <person name="Vallenet D."/>
            <person name="Medigue C."/>
            <person name="Rocha E.P.C."/>
            <person name="Denamur E."/>
        </authorList>
    </citation>
    <scope>NUCLEOTIDE SEQUENCE [LARGE SCALE GENOMIC DNA]</scope>
    <source>
        <strain>UMN026 / ExPEC</strain>
    </source>
</reference>
<keyword id="KW-0997">Cell inner membrane</keyword>
<keyword id="KW-1003">Cell membrane</keyword>
<keyword id="KW-0472">Membrane</keyword>
<keyword id="KW-0812">Transmembrane</keyword>
<keyword id="KW-1133">Transmembrane helix</keyword>
<keyword id="KW-0813">Transport</keyword>
<proteinExistence type="inferred from homology"/>
<feature type="chain" id="PRO_1000137488" description="Uncharacterized MFS-type transporter YcaD">
    <location>
        <begin position="1"/>
        <end position="382"/>
    </location>
</feature>
<feature type="transmembrane region" description="Helical" evidence="1">
    <location>
        <begin position="14"/>
        <end position="34"/>
    </location>
</feature>
<feature type="transmembrane region" description="Helical" evidence="1">
    <location>
        <begin position="45"/>
        <end position="65"/>
    </location>
</feature>
<feature type="transmembrane region" description="Helical" evidence="1">
    <location>
        <begin position="75"/>
        <end position="95"/>
    </location>
</feature>
<feature type="transmembrane region" description="Helical" evidence="1">
    <location>
        <begin position="102"/>
        <end position="122"/>
    </location>
</feature>
<feature type="transmembrane region" description="Helical" evidence="1">
    <location>
        <begin position="131"/>
        <end position="151"/>
    </location>
</feature>
<feature type="transmembrane region" description="Helical" evidence="1">
    <location>
        <begin position="157"/>
        <end position="177"/>
    </location>
</feature>
<feature type="transmembrane region" description="Helical" evidence="1">
    <location>
        <begin position="206"/>
        <end position="226"/>
    </location>
</feature>
<feature type="transmembrane region" description="Helical" evidence="1">
    <location>
        <begin position="235"/>
        <end position="255"/>
    </location>
</feature>
<feature type="transmembrane region" description="Helical" evidence="1">
    <location>
        <begin position="270"/>
        <end position="290"/>
    </location>
</feature>
<feature type="transmembrane region" description="Helical" evidence="1">
    <location>
        <begin position="291"/>
        <end position="311"/>
    </location>
</feature>
<feature type="transmembrane region" description="Helical" evidence="1">
    <location>
        <begin position="325"/>
        <end position="345"/>
    </location>
</feature>
<feature type="transmembrane region" description="Helical" evidence="1">
    <location>
        <begin position="348"/>
        <end position="368"/>
    </location>
</feature>
<organism>
    <name type="scientific">Escherichia coli O17:K52:H18 (strain UMN026 / ExPEC)</name>
    <dbReference type="NCBI Taxonomy" id="585056"/>
    <lineage>
        <taxon>Bacteria</taxon>
        <taxon>Pseudomonadati</taxon>
        <taxon>Pseudomonadota</taxon>
        <taxon>Gammaproteobacteria</taxon>
        <taxon>Enterobacterales</taxon>
        <taxon>Enterobacteriaceae</taxon>
        <taxon>Escherichia</taxon>
    </lineage>
</organism>
<evidence type="ECO:0000255" key="1">
    <source>
        <dbReference type="HAMAP-Rule" id="MF_01149"/>
    </source>
</evidence>
<protein>
    <recommendedName>
        <fullName evidence="1">Uncharacterized MFS-type transporter YcaD</fullName>
    </recommendedName>
</protein>
<gene>
    <name evidence="1" type="primary">ycaD</name>
    <name type="ordered locus">ECUMN_1093</name>
</gene>
<name>YCAD_ECOLU</name>
<sequence length="382" mass="41474">MSTYTRPVMLLLSGLLLLTLAIAVLNTLVPLWLAQEHMSTWQVGVVSSSYFTGNLVGTLLTGYVIKRIGFNRSYYLASFIFAAGCAGLGLMIGFWSWLTWRFVAGVGCAMIWVVVESALMCSGTSRNRGRLLAAYMMVYYVGTFLGQLLVSKVSTELMSVLPWVTGLTLAGILPLLFTRVLNQQAENHDSTSITSMLKLRQARLGVNGCIISGIVLGSLYGLMPLFLNHKGVSNASIGFWMAVLVSAGILGQWPIGRLADKFGRLLVLRVQVFVVILGSIAMLSQAAMAPALFILGAAGFTLYPVAMAWACEKVEHHQLVAMNQALLLSYTVGSLLGPSFTAMLMQNFSDNLLFIMIASVSFIYLLMLLRNAGHTPKPVAHV</sequence>
<dbReference type="EMBL" id="CU928163">
    <property type="protein sequence ID" value="CAR12302.1"/>
    <property type="molecule type" value="Genomic_DNA"/>
</dbReference>
<dbReference type="RefSeq" id="WP_000109299.1">
    <property type="nucleotide sequence ID" value="NC_011751.1"/>
</dbReference>
<dbReference type="RefSeq" id="YP_002411846.1">
    <property type="nucleotide sequence ID" value="NC_011751.1"/>
</dbReference>
<dbReference type="SMR" id="B7NAP9"/>
<dbReference type="STRING" id="585056.ECUMN_1093"/>
<dbReference type="KEGG" id="eum:ECUMN_1093"/>
<dbReference type="PATRIC" id="fig|585056.7.peg.1287"/>
<dbReference type="HOGENOM" id="CLU_035018_1_2_6"/>
<dbReference type="Proteomes" id="UP000007097">
    <property type="component" value="Chromosome"/>
</dbReference>
<dbReference type="GO" id="GO:0005886">
    <property type="term" value="C:plasma membrane"/>
    <property type="evidence" value="ECO:0007669"/>
    <property type="project" value="UniProtKB-SubCell"/>
</dbReference>
<dbReference type="GO" id="GO:0022857">
    <property type="term" value="F:transmembrane transporter activity"/>
    <property type="evidence" value="ECO:0007669"/>
    <property type="project" value="UniProtKB-UniRule"/>
</dbReference>
<dbReference type="CDD" id="cd17477">
    <property type="entry name" value="MFS_YcaD_like"/>
    <property type="match status" value="1"/>
</dbReference>
<dbReference type="FunFam" id="1.20.1250.20:FF:000041">
    <property type="entry name" value="Uncharacterized MFS-type transporter YcaD"/>
    <property type="match status" value="1"/>
</dbReference>
<dbReference type="FunFam" id="1.20.1250.20:FF:000066">
    <property type="entry name" value="Uncharacterized MFS-type transporter YcaD"/>
    <property type="match status" value="1"/>
</dbReference>
<dbReference type="Gene3D" id="1.20.1250.20">
    <property type="entry name" value="MFS general substrate transporter like domains"/>
    <property type="match status" value="2"/>
</dbReference>
<dbReference type="HAMAP" id="MF_01149">
    <property type="entry name" value="MFS_YcaD"/>
    <property type="match status" value="1"/>
</dbReference>
<dbReference type="InterPro" id="IPR011701">
    <property type="entry name" value="MFS"/>
</dbReference>
<dbReference type="InterPro" id="IPR020846">
    <property type="entry name" value="MFS_dom"/>
</dbReference>
<dbReference type="InterPro" id="IPR036259">
    <property type="entry name" value="MFS_trans_sf"/>
</dbReference>
<dbReference type="InterPro" id="IPR023745">
    <property type="entry name" value="MFS_YcaD"/>
</dbReference>
<dbReference type="InterPro" id="IPR047200">
    <property type="entry name" value="MFS_YcaD-like"/>
</dbReference>
<dbReference type="NCBIfam" id="NF002962">
    <property type="entry name" value="PRK03633.1"/>
    <property type="match status" value="1"/>
</dbReference>
<dbReference type="PANTHER" id="PTHR23521">
    <property type="entry name" value="TRANSPORTER MFS SUPERFAMILY"/>
    <property type="match status" value="1"/>
</dbReference>
<dbReference type="PANTHER" id="PTHR23521:SF2">
    <property type="entry name" value="TRANSPORTER MFS SUPERFAMILY"/>
    <property type="match status" value="1"/>
</dbReference>
<dbReference type="Pfam" id="PF07690">
    <property type="entry name" value="MFS_1"/>
    <property type="match status" value="1"/>
</dbReference>
<dbReference type="SUPFAM" id="SSF103473">
    <property type="entry name" value="MFS general substrate transporter"/>
    <property type="match status" value="1"/>
</dbReference>
<dbReference type="PROSITE" id="PS50850">
    <property type="entry name" value="MFS"/>
    <property type="match status" value="1"/>
</dbReference>
<comment type="subcellular location">
    <subcellularLocation>
        <location evidence="1">Cell inner membrane</location>
        <topology evidence="1">Multi-pass membrane protein</topology>
    </subcellularLocation>
</comment>
<comment type="similarity">
    <text evidence="1">Belongs to the major facilitator superfamily. YcaD (TC 2.A.1.26) family.</text>
</comment>